<proteinExistence type="evidence at protein level"/>
<evidence type="ECO:0000250" key="1">
    <source>
        <dbReference type="UniProtKB" id="Q53547"/>
    </source>
</evidence>
<evidence type="ECO:0000269" key="2">
    <source>
    </source>
</evidence>
<evidence type="ECO:0000303" key="3">
    <source>
    </source>
</evidence>
<evidence type="ECO:0000305" key="4"/>
<gene>
    <name evidence="3" type="primary">nvfD</name>
    <name type="ORF">P174DRAFT_465151</name>
</gene>
<feature type="chain" id="PRO_0000453079" description="Alpha/beta hydrolase nvfD">
    <location>
        <begin position="1"/>
        <end position="250"/>
    </location>
</feature>
<feature type="active site" description="Charge relay system" evidence="1">
    <location>
        <position position="198"/>
    </location>
</feature>
<feature type="active site" description="Charge relay system" evidence="1">
    <location>
        <position position="226"/>
    </location>
</feature>
<reference key="1">
    <citation type="journal article" date="2018" name="Proc. Natl. Acad. Sci. U.S.A.">
        <title>Linking secondary metabolites to gene clusters through genome sequencing of six diverse Aspergillus species.</title>
        <authorList>
            <person name="Kjaerboelling I."/>
            <person name="Vesth T.C."/>
            <person name="Frisvad J.C."/>
            <person name="Nybo J.L."/>
            <person name="Theobald S."/>
            <person name="Kuo A."/>
            <person name="Bowyer P."/>
            <person name="Matsuda Y."/>
            <person name="Mondo S."/>
            <person name="Lyhne E.K."/>
            <person name="Kogle M.E."/>
            <person name="Clum A."/>
            <person name="Lipzen A."/>
            <person name="Salamov A."/>
            <person name="Ngan C.Y."/>
            <person name="Daum C."/>
            <person name="Chiniquy J."/>
            <person name="Barry K."/>
            <person name="LaButti K."/>
            <person name="Haridas S."/>
            <person name="Simmons B.A."/>
            <person name="Magnuson J.K."/>
            <person name="Mortensen U.H."/>
            <person name="Larsen T.O."/>
            <person name="Grigoriev I.V."/>
            <person name="Baker S.E."/>
            <person name="Andersen M.R."/>
        </authorList>
    </citation>
    <scope>NUCLEOTIDE SEQUENCE [LARGE SCALE GENOMIC DNA]</scope>
    <source>
        <strain>IBT 16806</strain>
    </source>
</reference>
<reference key="2">
    <citation type="journal article" date="2018" name="Nat. Commun.">
        <title>Novofumigatonin biosynthesis involves a non-heme iron-dependent endoperoxide isomerase for orthoester formation.</title>
        <authorList>
            <person name="Matsuda Y."/>
            <person name="Bai T."/>
            <person name="Phippen C.B.W."/>
            <person name="Noedvig C.S."/>
            <person name="Kjaerboelling I."/>
            <person name="Vesth T.C."/>
            <person name="Andersen M.R."/>
            <person name="Mortensen U.H."/>
            <person name="Gotfredsen C.H."/>
            <person name="Abe I."/>
            <person name="Larsen T.O."/>
        </authorList>
    </citation>
    <scope>FUNCTION</scope>
    <scope>DISRUPTION PHENOTYPE</scope>
    <scope>CATALYTIC ACTIVITY</scope>
    <scope>PATHWAY</scope>
</reference>
<keyword id="KW-0378">Hydrolase</keyword>
<keyword id="KW-1185">Reference proteome</keyword>
<dbReference type="EC" id="3.1.1.-" evidence="2"/>
<dbReference type="EMBL" id="MSZS01000014">
    <property type="protein sequence ID" value="PKX88484.1"/>
    <property type="molecule type" value="Genomic_DNA"/>
</dbReference>
<dbReference type="SMR" id="A0A2I1BT15"/>
<dbReference type="STRING" id="1392255.A0A2I1BT15"/>
<dbReference type="ESTHER" id="aspn1-nvfd">
    <property type="family name" value="6_AlphaBeta_hydrolase"/>
</dbReference>
<dbReference type="VEuPathDB" id="FungiDB:P174DRAFT_465151"/>
<dbReference type="OMA" id="VRCQEGH"/>
<dbReference type="OrthoDB" id="408373at2759"/>
<dbReference type="UniPathway" id="UPA00213"/>
<dbReference type="Proteomes" id="UP000234474">
    <property type="component" value="Unassembled WGS sequence"/>
</dbReference>
<dbReference type="GO" id="GO:0016787">
    <property type="term" value="F:hydrolase activity"/>
    <property type="evidence" value="ECO:0007669"/>
    <property type="project" value="UniProtKB-KW"/>
</dbReference>
<dbReference type="GO" id="GO:0016854">
    <property type="term" value="F:racemase and epimerase activity"/>
    <property type="evidence" value="ECO:0000314"/>
    <property type="project" value="UniProt"/>
</dbReference>
<dbReference type="GO" id="GO:0140782">
    <property type="term" value="P:novofumigatonin biosynthetic process"/>
    <property type="evidence" value="ECO:0000314"/>
    <property type="project" value="GO_Central"/>
</dbReference>
<dbReference type="Gene3D" id="3.40.50.1820">
    <property type="entry name" value="alpha/beta hydrolase"/>
    <property type="match status" value="1"/>
</dbReference>
<dbReference type="InterPro" id="IPR000073">
    <property type="entry name" value="AB_hydrolase_1"/>
</dbReference>
<dbReference type="InterPro" id="IPR029058">
    <property type="entry name" value="AB_hydrolase_fold"/>
</dbReference>
<dbReference type="InterPro" id="IPR052897">
    <property type="entry name" value="Sec-Metab_Biosynth_Hydrolase"/>
</dbReference>
<dbReference type="PANTHER" id="PTHR37017">
    <property type="entry name" value="AB HYDROLASE-1 DOMAIN-CONTAINING PROTEIN-RELATED"/>
    <property type="match status" value="1"/>
</dbReference>
<dbReference type="PANTHER" id="PTHR37017:SF11">
    <property type="entry name" value="ESTERASE_LIPASE_THIOESTERASE DOMAIN-CONTAINING PROTEIN"/>
    <property type="match status" value="1"/>
</dbReference>
<dbReference type="Pfam" id="PF12697">
    <property type="entry name" value="Abhydrolase_6"/>
    <property type="match status" value="1"/>
</dbReference>
<dbReference type="SUPFAM" id="SSF53474">
    <property type="entry name" value="alpha/beta-Hydrolases"/>
    <property type="match status" value="1"/>
</dbReference>
<name>NVFD_ASPN1</name>
<protein>
    <recommendedName>
        <fullName evidence="3">Alpha/beta hydrolase nvfD</fullName>
        <ecNumber evidence="2">3.1.1.-</ecNumber>
    </recommendedName>
    <alternativeName>
        <fullName evidence="3">Novofumigatonin biosynthesis cluster protein D</fullName>
    </alternativeName>
</protein>
<accession>A0A2I1BT15</accession>
<organism>
    <name type="scientific">Aspergillus novofumigatus (strain IBT 16806)</name>
    <dbReference type="NCBI Taxonomy" id="1392255"/>
    <lineage>
        <taxon>Eukaryota</taxon>
        <taxon>Fungi</taxon>
        <taxon>Dikarya</taxon>
        <taxon>Ascomycota</taxon>
        <taxon>Pezizomycotina</taxon>
        <taxon>Eurotiomycetes</taxon>
        <taxon>Eurotiomycetidae</taxon>
        <taxon>Eurotiales</taxon>
        <taxon>Aspergillaceae</taxon>
        <taxon>Aspergillus</taxon>
        <taxon>Aspergillus subgen. Fumigati</taxon>
    </lineage>
</organism>
<comment type="function">
    <text evidence="2">Alpha/beta hydrolase; part of the gene cluster that mediates the biosynthesis of novofumigatonin, a heavily oxygenated meroterpenoid containing a unique orthoester moiety (PubMed:29968715). The first step of the pathway is the synthesis of 3,5-dimethylorsellinic acid (DMOA) by the polyketide synthase nvfA via condensation of one acetyl-CoA starter unit with 3 malonyl-CoA units and 2 methylations (PubMed:29968715). DMOA is then converted to farnesyl-DMOA by the farnesyltransferase nvfB (PubMed:29968715). Epoxydation by FAD-dependent monooxygenase nvfK, followed by a protonation-initiated cyclization catalyzed by the terpene cyclase nvfL leads to the production of asnavolin H (PubMed:29968715). The short chain dehydrogenase nvfC then as a 3-OH dehydrogenase of asnovolin H to yield chemesin D (PubMed:29968715). There are two branches to synthesize asnovolin A from chemesin D (PubMed:29968715). In one branch, chemesin D undergoes Baeyer-Villiger oxidation by nvfH, methylation by nvfJ, and enoyl reduction by the nvfM D enoylreductase that reduces the double bond between C-5'and C-6', to form respectively asnovolin I, asnovolin K, and asnovolin A (PubMed:29968715). In the other branch, the methylation precedes the Baeyer-Villiger oxidation and the enoyl reduction to yield asnovolin A via the asnovolin J intermediate (PubMed:29968715). Asnovolin A is further converted to fumigatonoid A by the Fe(II)/2-oxoglutarate-dependent dioxygenase nvfI that catalyzes an endoperoxidation reaction (PubMed:29968715). The alpha/beta hydrolase nvfD then acts as an epimerase that converts fumigatonoid A to its C-5' epimer, which then undergoes spontaneous or nvfD-catalyzed lactonization (PubMed:29968715). The following step utilizes the ketoreductase nvfG to produce fumigatonoid B (PubMed:29968715). The dioxygenase nvfE further converts fumigatonoid B into fumigatonoid C (PubMed:29968715). Finally the Fe(II)/2-oxoglutarate-dependent dioxygenase nvfF catalyzes two rounds of oxidation to transform fumigatonoid C into the end product, novofumigatonin A (PubMed:29968715).</text>
</comment>
<comment type="pathway">
    <text evidence="2">Secondary metabolite biosynthesis; terpenoid biosynthesis.</text>
</comment>
<comment type="disruption phenotype">
    <text evidence="2">Completely abolishes the production of novofumigatonin, but accumulates fumigatonoid A and asnovolin A.</text>
</comment>
<comment type="similarity">
    <text evidence="4">Belongs to the AB hydrolase superfamily.</text>
</comment>
<sequence length="250" mass="27219">MLKPAIIIVPGALHRPEHYQGIVSRLHKLQYEAVAVSMPSLSSSPPQPTWTEDVEAIRKAIFKFSESGQDVVLVGHSYSGILISEASKGLSRKDLPHGEGAVVRLIYMCAIAVPVGESLTGQLEPRTPQEVEAFREEGSISLLDADKVRDVLYNKCEPKVADWAISLLGKQPVTTMSTPATHAAWLEIPSTYLICEDDLAVPECVQLRMAKQGNGAFDIVRCQEGHAPCLSNPDLVVRMIRNAAGEAIEI</sequence>